<evidence type="ECO:0000255" key="1">
    <source>
        <dbReference type="HAMAP-Rule" id="MF_00214"/>
    </source>
</evidence>
<protein>
    <recommendedName>
        <fullName evidence="1">3-dehydroquinate dehydratase</fullName>
        <shortName evidence="1">3-dehydroquinase</shortName>
        <ecNumber evidence="1">4.2.1.10</ecNumber>
    </recommendedName>
    <alternativeName>
        <fullName evidence="1">Type I DHQase</fullName>
    </alternativeName>
    <alternativeName>
        <fullName evidence="1">Type I dehydroquinase</fullName>
        <shortName evidence="1">DHQ1</shortName>
    </alternativeName>
</protein>
<accession>Q9YEK1</accession>
<name>AROD_AERPE</name>
<proteinExistence type="inferred from homology"/>
<feature type="chain" id="PRO_0000138825" description="3-dehydroquinate dehydratase">
    <location>
        <begin position="1"/>
        <end position="222"/>
    </location>
</feature>
<feature type="active site" description="Proton donor/acceptor" evidence="1">
    <location>
        <position position="117"/>
    </location>
</feature>
<feature type="active site" description="Schiff-base intermediate with substrate" evidence="1">
    <location>
        <position position="143"/>
    </location>
</feature>
<feature type="binding site" evidence="1">
    <location>
        <begin position="32"/>
        <end position="34"/>
    </location>
    <ligand>
        <name>3-dehydroquinate</name>
        <dbReference type="ChEBI" id="CHEBI:32364"/>
    </ligand>
</feature>
<feature type="binding site" evidence="1">
    <location>
        <position position="64"/>
    </location>
    <ligand>
        <name>3-dehydroquinate</name>
        <dbReference type="ChEBI" id="CHEBI:32364"/>
    </ligand>
</feature>
<feature type="binding site" evidence="1">
    <location>
        <position position="181"/>
    </location>
    <ligand>
        <name>3-dehydroquinate</name>
        <dbReference type="ChEBI" id="CHEBI:32364"/>
    </ligand>
</feature>
<comment type="function">
    <text evidence="1">Involved in the third step of the chorismate pathway, which leads to the biosynthesis of aromatic amino acids. Catalyzes the cis-dehydration of 3-dehydroquinate (DHQ) and introduces the first double bond of the aromatic ring to yield 3-dehydroshikimate.</text>
</comment>
<comment type="catalytic activity">
    <reaction evidence="1">
        <text>3-dehydroquinate = 3-dehydroshikimate + H2O</text>
        <dbReference type="Rhea" id="RHEA:21096"/>
        <dbReference type="ChEBI" id="CHEBI:15377"/>
        <dbReference type="ChEBI" id="CHEBI:16630"/>
        <dbReference type="ChEBI" id="CHEBI:32364"/>
        <dbReference type="EC" id="4.2.1.10"/>
    </reaction>
</comment>
<comment type="pathway">
    <text evidence="1">Metabolic intermediate biosynthesis; chorismate biosynthesis; chorismate from D-erythrose 4-phosphate and phosphoenolpyruvate: step 3/7.</text>
</comment>
<comment type="subunit">
    <text evidence="1">Homodimer.</text>
</comment>
<comment type="similarity">
    <text evidence="1">Belongs to the type-I 3-dehydroquinase family.</text>
</comment>
<reference key="1">
    <citation type="journal article" date="1999" name="DNA Res.">
        <title>Complete genome sequence of an aerobic hyper-thermophilic crenarchaeon, Aeropyrum pernix K1.</title>
        <authorList>
            <person name="Kawarabayasi Y."/>
            <person name="Hino Y."/>
            <person name="Horikawa H."/>
            <person name="Yamazaki S."/>
            <person name="Haikawa Y."/>
            <person name="Jin-no K."/>
            <person name="Takahashi M."/>
            <person name="Sekine M."/>
            <person name="Baba S."/>
            <person name="Ankai A."/>
            <person name="Kosugi H."/>
            <person name="Hosoyama A."/>
            <person name="Fukui S."/>
            <person name="Nagai Y."/>
            <person name="Nishijima K."/>
            <person name="Nakazawa H."/>
            <person name="Takamiya M."/>
            <person name="Masuda S."/>
            <person name="Funahashi T."/>
            <person name="Tanaka T."/>
            <person name="Kudoh Y."/>
            <person name="Yamazaki J."/>
            <person name="Kushida N."/>
            <person name="Oguchi A."/>
            <person name="Aoki K."/>
            <person name="Kubota K."/>
            <person name="Nakamura Y."/>
            <person name="Nomura N."/>
            <person name="Sako Y."/>
            <person name="Kikuchi H."/>
        </authorList>
    </citation>
    <scope>NUCLEOTIDE SEQUENCE [LARGE SCALE GENOMIC DNA]</scope>
    <source>
        <strain>ATCC 700893 / DSM 11879 / JCM 9820 / NBRC 100138 / K1</strain>
    </source>
</reference>
<gene>
    <name evidence="1" type="primary">aroD</name>
    <name type="ordered locus">APE_0577</name>
</gene>
<sequence>MGASGRICTVVPVEDAGEAAMLALSSPTGCVELRLDFYPGDPGEALELLATRLHSPARVVVTLRSAGHGGLDRRARGERRAVLARLEDLAPEGWLVDYEVEDLHASSGCSGCIASSHPTTPPTPRRALEEAAVAERLGASAYKLVYPGVEPWEQAAAARLVAEAGGFATSFTLGPGTLASRLTALALGAPLVFGSHPRAPLDGVPQSSEIMELYLRMGLGES</sequence>
<organism>
    <name type="scientific">Aeropyrum pernix (strain ATCC 700893 / DSM 11879 / JCM 9820 / NBRC 100138 / K1)</name>
    <dbReference type="NCBI Taxonomy" id="272557"/>
    <lineage>
        <taxon>Archaea</taxon>
        <taxon>Thermoproteota</taxon>
        <taxon>Thermoprotei</taxon>
        <taxon>Desulfurococcales</taxon>
        <taxon>Desulfurococcaceae</taxon>
        <taxon>Aeropyrum</taxon>
    </lineage>
</organism>
<keyword id="KW-0028">Amino-acid biosynthesis</keyword>
<keyword id="KW-0057">Aromatic amino acid biosynthesis</keyword>
<keyword id="KW-0456">Lyase</keyword>
<keyword id="KW-1185">Reference proteome</keyword>
<keyword id="KW-0704">Schiff base</keyword>
<dbReference type="EC" id="4.2.1.10" evidence="1"/>
<dbReference type="EMBL" id="BA000002">
    <property type="protein sequence ID" value="BAA79545.1"/>
    <property type="molecule type" value="Genomic_DNA"/>
</dbReference>
<dbReference type="PIR" id="A72643">
    <property type="entry name" value="A72643"/>
</dbReference>
<dbReference type="RefSeq" id="WP_010865842.1">
    <property type="nucleotide sequence ID" value="NC_000854.2"/>
</dbReference>
<dbReference type="SMR" id="Q9YEK1"/>
<dbReference type="STRING" id="272557.APE_0577"/>
<dbReference type="EnsemblBacteria" id="BAA79545">
    <property type="protein sequence ID" value="BAA79545"/>
    <property type="gene ID" value="APE_0577"/>
</dbReference>
<dbReference type="GeneID" id="1444735"/>
<dbReference type="KEGG" id="ape:APE_0577"/>
<dbReference type="eggNOG" id="arCOG02097">
    <property type="taxonomic scope" value="Archaea"/>
</dbReference>
<dbReference type="UniPathway" id="UPA00053">
    <property type="reaction ID" value="UER00086"/>
</dbReference>
<dbReference type="Proteomes" id="UP000002518">
    <property type="component" value="Chromosome"/>
</dbReference>
<dbReference type="GO" id="GO:0003855">
    <property type="term" value="F:3-dehydroquinate dehydratase activity"/>
    <property type="evidence" value="ECO:0007669"/>
    <property type="project" value="UniProtKB-UniRule"/>
</dbReference>
<dbReference type="GO" id="GO:0008652">
    <property type="term" value="P:amino acid biosynthetic process"/>
    <property type="evidence" value="ECO:0007669"/>
    <property type="project" value="UniProtKB-KW"/>
</dbReference>
<dbReference type="GO" id="GO:0009073">
    <property type="term" value="P:aromatic amino acid family biosynthetic process"/>
    <property type="evidence" value="ECO:0007669"/>
    <property type="project" value="UniProtKB-KW"/>
</dbReference>
<dbReference type="GO" id="GO:0009423">
    <property type="term" value="P:chorismate biosynthetic process"/>
    <property type="evidence" value="ECO:0007669"/>
    <property type="project" value="UniProtKB-UniRule"/>
</dbReference>
<dbReference type="CDD" id="cd00502">
    <property type="entry name" value="DHQase_I"/>
    <property type="match status" value="1"/>
</dbReference>
<dbReference type="Gene3D" id="3.20.20.70">
    <property type="entry name" value="Aldolase class I"/>
    <property type="match status" value="1"/>
</dbReference>
<dbReference type="HAMAP" id="MF_00214">
    <property type="entry name" value="AroD"/>
    <property type="match status" value="1"/>
</dbReference>
<dbReference type="InterPro" id="IPR013785">
    <property type="entry name" value="Aldolase_TIM"/>
</dbReference>
<dbReference type="InterPro" id="IPR001381">
    <property type="entry name" value="DHquinase_I"/>
</dbReference>
<dbReference type="Pfam" id="PF01487">
    <property type="entry name" value="DHquinase_I"/>
    <property type="match status" value="1"/>
</dbReference>
<dbReference type="SUPFAM" id="SSF51569">
    <property type="entry name" value="Aldolase"/>
    <property type="match status" value="1"/>
</dbReference>